<comment type="function">
    <text evidence="2">Involved in the biosynthesis of the yellow-orange carotenoid staphyloxanthin, which plays a role in the virulence via its protective function against oxidative stress. Catalyzes the head-to-head condensation of two molecules of farnesyl diphosphate (FPP) into the colorless C(30) carotenoid 4,4'-diapophytoene (dehydrosqualene).</text>
</comment>
<comment type="catalytic activity">
    <reaction evidence="2">
        <text>2 (2E,6E)-farnesyl diphosphate = 15-cis-4,4'-diapophytoene + 2 diphosphate</text>
        <dbReference type="Rhea" id="RHEA:31547"/>
        <dbReference type="ChEBI" id="CHEBI:33019"/>
        <dbReference type="ChEBI" id="CHEBI:62738"/>
        <dbReference type="ChEBI" id="CHEBI:175763"/>
        <dbReference type="EC" id="2.5.1.96"/>
    </reaction>
</comment>
<comment type="cofactor">
    <cofactor evidence="1">
        <name>Mg(2+)</name>
        <dbReference type="ChEBI" id="CHEBI:18420"/>
    </cofactor>
    <text evidence="1">Binds 2 Mg(2+) ions per subunit.</text>
</comment>
<comment type="pathway">
    <text evidence="2">Carotenoid biosynthesis; staphyloxanthin biosynthesis; staphyloxanthin from farnesyl diphosphate: step 1/5.</text>
</comment>
<comment type="similarity">
    <text evidence="3">Belongs to the phytoene/squalene synthase family. CrtM subfamily.</text>
</comment>
<proteinExistence type="inferred from homology"/>
<accession>Q6G6B2</accession>
<feature type="chain" id="PRO_0000282622" description="4,4'-diapophytoene synthase">
    <location>
        <begin position="1"/>
        <end position="287"/>
    </location>
</feature>
<feature type="binding site" evidence="1">
    <location>
        <begin position="18"/>
        <end position="21"/>
    </location>
    <ligand>
        <name>(2E,6E)-farnesyl diphosphate</name>
        <dbReference type="ChEBI" id="CHEBI:175763"/>
        <label>1</label>
    </ligand>
</feature>
<feature type="binding site" evidence="1">
    <location>
        <position position="41"/>
    </location>
    <ligand>
        <name>(2E,6E)-farnesyl diphosphate</name>
        <dbReference type="ChEBI" id="CHEBI:175763"/>
        <label>1</label>
    </ligand>
</feature>
<feature type="binding site" evidence="1">
    <location>
        <position position="45"/>
    </location>
    <ligand>
        <name>(2E,6E)-farnesyl diphosphate</name>
        <dbReference type="ChEBI" id="CHEBI:175763"/>
        <label>1</label>
    </ligand>
</feature>
<feature type="binding site" evidence="1">
    <location>
        <position position="45"/>
    </location>
    <ligand>
        <name>(2E,6E)-farnesyl diphosphate</name>
        <dbReference type="ChEBI" id="CHEBI:175763"/>
        <label>2</label>
    </ligand>
</feature>
<feature type="binding site" evidence="1">
    <location>
        <position position="48"/>
    </location>
    <ligand>
        <name>Mg(2+)</name>
        <dbReference type="ChEBI" id="CHEBI:18420"/>
        <label>1</label>
    </ligand>
</feature>
<feature type="binding site" evidence="1">
    <location>
        <position position="52"/>
    </location>
    <ligand>
        <name>Mg(2+)</name>
        <dbReference type="ChEBI" id="CHEBI:18420"/>
        <label>1</label>
    </ligand>
</feature>
<feature type="binding site" evidence="1">
    <location>
        <position position="165"/>
    </location>
    <ligand>
        <name>(2E,6E)-farnesyl diphosphate</name>
        <dbReference type="ChEBI" id="CHEBI:175763"/>
        <label>2</label>
    </ligand>
</feature>
<feature type="binding site" evidence="1">
    <location>
        <position position="168"/>
    </location>
    <ligand>
        <name>Mg(2+)</name>
        <dbReference type="ChEBI" id="CHEBI:18420"/>
        <label>2</label>
    </ligand>
</feature>
<feature type="binding site" evidence="1">
    <location>
        <position position="171"/>
    </location>
    <ligand>
        <name>(2E,6E)-farnesyl diphosphate</name>
        <dbReference type="ChEBI" id="CHEBI:175763"/>
        <label>1</label>
    </ligand>
</feature>
<feature type="binding site" evidence="1">
    <location>
        <position position="172"/>
    </location>
    <ligand>
        <name>Mg(2+)</name>
        <dbReference type="ChEBI" id="CHEBI:18420"/>
        <label>2</label>
    </ligand>
</feature>
<feature type="binding site" evidence="1">
    <location>
        <position position="248"/>
    </location>
    <ligand>
        <name>(2E,6E)-farnesyl diphosphate</name>
        <dbReference type="ChEBI" id="CHEBI:175763"/>
        <label>1</label>
    </ligand>
</feature>
<reference key="1">
    <citation type="journal article" date="2004" name="Proc. Natl. Acad. Sci. U.S.A.">
        <title>Complete genomes of two clinical Staphylococcus aureus strains: evidence for the rapid evolution of virulence and drug resistance.</title>
        <authorList>
            <person name="Holden M.T.G."/>
            <person name="Feil E.J."/>
            <person name="Lindsay J.A."/>
            <person name="Peacock S.J."/>
            <person name="Day N.P.J."/>
            <person name="Enright M.C."/>
            <person name="Foster T.J."/>
            <person name="Moore C.E."/>
            <person name="Hurst L."/>
            <person name="Atkin R."/>
            <person name="Barron A."/>
            <person name="Bason N."/>
            <person name="Bentley S.D."/>
            <person name="Chillingworth C."/>
            <person name="Chillingworth T."/>
            <person name="Churcher C."/>
            <person name="Clark L."/>
            <person name="Corton C."/>
            <person name="Cronin A."/>
            <person name="Doggett J."/>
            <person name="Dowd L."/>
            <person name="Feltwell T."/>
            <person name="Hance Z."/>
            <person name="Harris B."/>
            <person name="Hauser H."/>
            <person name="Holroyd S."/>
            <person name="Jagels K."/>
            <person name="James K.D."/>
            <person name="Lennard N."/>
            <person name="Line A."/>
            <person name="Mayes R."/>
            <person name="Moule S."/>
            <person name="Mungall K."/>
            <person name="Ormond D."/>
            <person name="Quail M.A."/>
            <person name="Rabbinowitsch E."/>
            <person name="Rutherford K.M."/>
            <person name="Sanders M."/>
            <person name="Sharp S."/>
            <person name="Simmonds M."/>
            <person name="Stevens K."/>
            <person name="Whitehead S."/>
            <person name="Barrell B.G."/>
            <person name="Spratt B.G."/>
            <person name="Parkhill J."/>
        </authorList>
    </citation>
    <scope>NUCLEOTIDE SEQUENCE [LARGE SCALE GENOMIC DNA]</scope>
    <source>
        <strain>MSSA476</strain>
    </source>
</reference>
<organism>
    <name type="scientific">Staphylococcus aureus (strain MSSA476)</name>
    <dbReference type="NCBI Taxonomy" id="282459"/>
    <lineage>
        <taxon>Bacteria</taxon>
        <taxon>Bacillati</taxon>
        <taxon>Bacillota</taxon>
        <taxon>Bacilli</taxon>
        <taxon>Bacillales</taxon>
        <taxon>Staphylococcaceae</taxon>
        <taxon>Staphylococcus</taxon>
    </lineage>
</organism>
<gene>
    <name type="primary">crtM</name>
    <name type="ordered locus">SAS2448</name>
</gene>
<sequence>MTMMDMNFKYCHKIMKKHSKSFSYAFDLLPEDQRKAVWAIYAVCRKIDDSIDVYGDIQFLNQIKEDIQSIEKYPYEHHHFQSDRRIMMALQHVAQHKNIAFQSFYNLIDTVYKDQHFTMFETDAELFGYCYGVAGTVGEVLTPILSDHETHQTYDVARRLGESLQLINILRDVGEDFDNERIYFSKQRLKQYEVDIAEVYQNGVNNHYIDLWEYYAAIAEKDFQDVMDQIKVFSIEAQPIIELAARIYIEILDEVRQANYTLHERVFVDKRKKAKLFHEINSKYHRI</sequence>
<keyword id="KW-0125">Carotenoid biosynthesis</keyword>
<keyword id="KW-0460">Magnesium</keyword>
<keyword id="KW-0479">Metal-binding</keyword>
<keyword id="KW-0808">Transferase</keyword>
<keyword id="KW-0843">Virulence</keyword>
<evidence type="ECO:0000250" key="1">
    <source>
        <dbReference type="UniProtKB" id="A9JQL9"/>
    </source>
</evidence>
<evidence type="ECO:0000250" key="2">
    <source>
        <dbReference type="UniProtKB" id="Q2FV59"/>
    </source>
</evidence>
<evidence type="ECO:0000305" key="3"/>
<name>CRTM_STAAS</name>
<dbReference type="EC" id="2.5.1.96" evidence="2"/>
<dbReference type="EMBL" id="BX571857">
    <property type="protein sequence ID" value="CAG44264.1"/>
    <property type="molecule type" value="Genomic_DNA"/>
</dbReference>
<dbReference type="RefSeq" id="WP_000178307.1">
    <property type="nucleotide sequence ID" value="NC_002953.3"/>
</dbReference>
<dbReference type="SMR" id="Q6G6B2"/>
<dbReference type="KEGG" id="sas:SAS2448"/>
<dbReference type="HOGENOM" id="CLU_037269_1_3_9"/>
<dbReference type="UniPathway" id="UPA00029">
    <property type="reaction ID" value="UER00556"/>
</dbReference>
<dbReference type="GO" id="GO:0004311">
    <property type="term" value="F:geranylgeranyl diphosphate synthase activity"/>
    <property type="evidence" value="ECO:0007669"/>
    <property type="project" value="InterPro"/>
</dbReference>
<dbReference type="GO" id="GO:0046872">
    <property type="term" value="F:metal ion binding"/>
    <property type="evidence" value="ECO:0007669"/>
    <property type="project" value="UniProtKB-KW"/>
</dbReference>
<dbReference type="GO" id="GO:0051996">
    <property type="term" value="F:squalene synthase [NAD(P)H] activity"/>
    <property type="evidence" value="ECO:0007669"/>
    <property type="project" value="InterPro"/>
</dbReference>
<dbReference type="GO" id="GO:0016117">
    <property type="term" value="P:carotenoid biosynthetic process"/>
    <property type="evidence" value="ECO:0007669"/>
    <property type="project" value="UniProtKB-KW"/>
</dbReference>
<dbReference type="CDD" id="cd00683">
    <property type="entry name" value="Trans_IPPS_HH"/>
    <property type="match status" value="1"/>
</dbReference>
<dbReference type="FunFam" id="1.10.600.10:FF:000028">
    <property type="entry name" value="Dehydrosqualene synthase"/>
    <property type="match status" value="1"/>
</dbReference>
<dbReference type="Gene3D" id="1.10.600.10">
    <property type="entry name" value="Farnesyl Diphosphate Synthase"/>
    <property type="match status" value="1"/>
</dbReference>
<dbReference type="InterPro" id="IPR008949">
    <property type="entry name" value="Isoprenoid_synthase_dom_sf"/>
</dbReference>
<dbReference type="InterPro" id="IPR002060">
    <property type="entry name" value="Squ/phyt_synthse"/>
</dbReference>
<dbReference type="InterPro" id="IPR019845">
    <property type="entry name" value="Squalene/phytoene_synthase_CS"/>
</dbReference>
<dbReference type="InterPro" id="IPR044843">
    <property type="entry name" value="Trans_IPPS_bact-type"/>
</dbReference>
<dbReference type="InterPro" id="IPR033904">
    <property type="entry name" value="Trans_IPPS_HH"/>
</dbReference>
<dbReference type="PANTHER" id="PTHR31480">
    <property type="entry name" value="BIFUNCTIONAL LYCOPENE CYCLASE/PHYTOENE SYNTHASE"/>
    <property type="match status" value="1"/>
</dbReference>
<dbReference type="Pfam" id="PF00494">
    <property type="entry name" value="SQS_PSY"/>
    <property type="match status" value="1"/>
</dbReference>
<dbReference type="SFLD" id="SFLDG01212">
    <property type="entry name" value="Phytoene_synthase_like"/>
    <property type="match status" value="1"/>
</dbReference>
<dbReference type="SFLD" id="SFLDG01018">
    <property type="entry name" value="Squalene/Phytoene_Synthase_Lik"/>
    <property type="match status" value="1"/>
</dbReference>
<dbReference type="SUPFAM" id="SSF48576">
    <property type="entry name" value="Terpenoid synthases"/>
    <property type="match status" value="1"/>
</dbReference>
<dbReference type="PROSITE" id="PS01044">
    <property type="entry name" value="SQUALEN_PHYTOEN_SYN_1"/>
    <property type="match status" value="1"/>
</dbReference>
<protein>
    <recommendedName>
        <fullName evidence="2">4,4'-diapophytoene synthase</fullName>
        <shortName evidence="2">DAP synthase</shortName>
        <ecNumber evidence="2">2.5.1.96</ecNumber>
    </recommendedName>
    <alternativeName>
        <fullName evidence="2">C30 carotenoid synthase</fullName>
    </alternativeName>
    <alternativeName>
        <fullName evidence="2">Dehydrosqualene synthase</fullName>
    </alternativeName>
</protein>